<reference key="1">
    <citation type="journal article" date="2003" name="Genome Res.">
        <title>Comparative genome analysis of Vibrio vulnificus, a marine pathogen.</title>
        <authorList>
            <person name="Chen C.-Y."/>
            <person name="Wu K.-M."/>
            <person name="Chang Y.-C."/>
            <person name="Chang C.-H."/>
            <person name="Tsai H.-C."/>
            <person name="Liao T.-L."/>
            <person name="Liu Y.-M."/>
            <person name="Chen H.-J."/>
            <person name="Shen A.B.-T."/>
            <person name="Li J.-C."/>
            <person name="Su T.-L."/>
            <person name="Shao C.-P."/>
            <person name="Lee C.-T."/>
            <person name="Hor L.-I."/>
            <person name="Tsai S.-F."/>
        </authorList>
    </citation>
    <scope>NUCLEOTIDE SEQUENCE [LARGE SCALE GENOMIC DNA]</scope>
    <source>
        <strain>YJ016</strain>
    </source>
</reference>
<organism>
    <name type="scientific">Vibrio vulnificus (strain YJ016)</name>
    <dbReference type="NCBI Taxonomy" id="196600"/>
    <lineage>
        <taxon>Bacteria</taxon>
        <taxon>Pseudomonadati</taxon>
        <taxon>Pseudomonadota</taxon>
        <taxon>Gammaproteobacteria</taxon>
        <taxon>Vibrionales</taxon>
        <taxon>Vibrionaceae</taxon>
        <taxon>Vibrio</taxon>
    </lineage>
</organism>
<feature type="chain" id="PRO_0000192225" description="33 kDa chaperonin">
    <location>
        <begin position="1"/>
        <end position="291"/>
    </location>
</feature>
<feature type="disulfide bond" description="Redox-active" evidence="1">
    <location>
        <begin position="229"/>
        <end position="231"/>
    </location>
</feature>
<feature type="disulfide bond" description="Redox-active" evidence="1">
    <location>
        <begin position="262"/>
        <end position="265"/>
    </location>
</feature>
<keyword id="KW-0143">Chaperone</keyword>
<keyword id="KW-0963">Cytoplasm</keyword>
<keyword id="KW-1015">Disulfide bond</keyword>
<keyword id="KW-0676">Redox-active center</keyword>
<keyword id="KW-0862">Zinc</keyword>
<sequence>MASNVLNRYLFEDLSVRGELVQLDEAYQRIISSKDYPAALQKLLGELLVSTTLLTATLKFEGSITIQLQGDGPVSLAVINGDNEQKIRGVARWEGHIADDATLHDMMGKGYMVITIEPKKGERYQGIVGLEGDNLEQVLEGYFERSEQLKTRIWIRTGEHEGKAHAAGMLIQVMPDGTGSENDFEHLEQLTNTVKNEELFTLPANELLYRLYNQEQVRLFEPQNVEFRCGCSRERSGAAIVTVDKNEIYDILASDGSVSLHCDYCGTTYSFDESDVNKLYEEAASEPKTLH</sequence>
<evidence type="ECO:0000255" key="1">
    <source>
        <dbReference type="HAMAP-Rule" id="MF_00117"/>
    </source>
</evidence>
<gene>
    <name evidence="1" type="primary">hslO</name>
    <name type="ordered locus">VV0208</name>
</gene>
<dbReference type="EMBL" id="BA000037">
    <property type="protein sequence ID" value="BAC92972.1"/>
    <property type="molecule type" value="Genomic_DNA"/>
</dbReference>
<dbReference type="RefSeq" id="WP_011078947.1">
    <property type="nucleotide sequence ID" value="NC_005139.1"/>
</dbReference>
<dbReference type="SMR" id="Q7MQ02"/>
<dbReference type="STRING" id="672.VV93_v1c01930"/>
<dbReference type="KEGG" id="vvy:VV0208"/>
<dbReference type="eggNOG" id="COG1281">
    <property type="taxonomic scope" value="Bacteria"/>
</dbReference>
<dbReference type="HOGENOM" id="CLU_054493_0_0_6"/>
<dbReference type="Proteomes" id="UP000002675">
    <property type="component" value="Chromosome I"/>
</dbReference>
<dbReference type="GO" id="GO:0005737">
    <property type="term" value="C:cytoplasm"/>
    <property type="evidence" value="ECO:0007669"/>
    <property type="project" value="UniProtKB-SubCell"/>
</dbReference>
<dbReference type="GO" id="GO:0044183">
    <property type="term" value="F:protein folding chaperone"/>
    <property type="evidence" value="ECO:0007669"/>
    <property type="project" value="TreeGrafter"/>
</dbReference>
<dbReference type="GO" id="GO:0051082">
    <property type="term" value="F:unfolded protein binding"/>
    <property type="evidence" value="ECO:0007669"/>
    <property type="project" value="UniProtKB-UniRule"/>
</dbReference>
<dbReference type="GO" id="GO:0042026">
    <property type="term" value="P:protein refolding"/>
    <property type="evidence" value="ECO:0007669"/>
    <property type="project" value="TreeGrafter"/>
</dbReference>
<dbReference type="CDD" id="cd00498">
    <property type="entry name" value="Hsp33"/>
    <property type="match status" value="1"/>
</dbReference>
<dbReference type="Gene3D" id="1.10.287.480">
    <property type="entry name" value="helix hairpin bin"/>
    <property type="match status" value="1"/>
</dbReference>
<dbReference type="Gene3D" id="3.55.30.10">
    <property type="entry name" value="Hsp33 domain"/>
    <property type="match status" value="1"/>
</dbReference>
<dbReference type="Gene3D" id="3.90.1280.10">
    <property type="entry name" value="HSP33 redox switch-like"/>
    <property type="match status" value="1"/>
</dbReference>
<dbReference type="HAMAP" id="MF_00117">
    <property type="entry name" value="HslO"/>
    <property type="match status" value="1"/>
</dbReference>
<dbReference type="InterPro" id="IPR000397">
    <property type="entry name" value="Heat_shock_Hsp33"/>
</dbReference>
<dbReference type="InterPro" id="IPR016154">
    <property type="entry name" value="Heat_shock_Hsp33_C"/>
</dbReference>
<dbReference type="InterPro" id="IPR016153">
    <property type="entry name" value="Heat_shock_Hsp33_N"/>
</dbReference>
<dbReference type="InterPro" id="IPR023212">
    <property type="entry name" value="Hsp33_helix_hairpin_bin_dom_sf"/>
</dbReference>
<dbReference type="NCBIfam" id="NF001033">
    <property type="entry name" value="PRK00114.1"/>
    <property type="match status" value="1"/>
</dbReference>
<dbReference type="PANTHER" id="PTHR30111">
    <property type="entry name" value="33 KDA CHAPERONIN"/>
    <property type="match status" value="1"/>
</dbReference>
<dbReference type="PANTHER" id="PTHR30111:SF1">
    <property type="entry name" value="33 KDA CHAPERONIN"/>
    <property type="match status" value="1"/>
</dbReference>
<dbReference type="Pfam" id="PF01430">
    <property type="entry name" value="HSP33"/>
    <property type="match status" value="1"/>
</dbReference>
<dbReference type="PIRSF" id="PIRSF005261">
    <property type="entry name" value="Heat_shock_Hsp33"/>
    <property type="match status" value="1"/>
</dbReference>
<dbReference type="SUPFAM" id="SSF64397">
    <property type="entry name" value="Hsp33 domain"/>
    <property type="match status" value="1"/>
</dbReference>
<dbReference type="SUPFAM" id="SSF118352">
    <property type="entry name" value="HSP33 redox switch-like"/>
    <property type="match status" value="1"/>
</dbReference>
<name>HSLO_VIBVY</name>
<comment type="function">
    <text evidence="1">Redox regulated molecular chaperone. Protects both thermally unfolding and oxidatively damaged proteins from irreversible aggregation. Plays an important role in the bacterial defense system toward oxidative stress.</text>
</comment>
<comment type="subcellular location">
    <subcellularLocation>
        <location evidence="1">Cytoplasm</location>
    </subcellularLocation>
</comment>
<comment type="PTM">
    <text evidence="1">Under oxidizing conditions two disulfide bonds are formed involving the reactive cysteines. Under reducing conditions zinc is bound to the reactive cysteines and the protein is inactive.</text>
</comment>
<comment type="similarity">
    <text evidence="1">Belongs to the HSP33 family.</text>
</comment>
<proteinExistence type="inferred from homology"/>
<protein>
    <recommendedName>
        <fullName evidence="1">33 kDa chaperonin</fullName>
    </recommendedName>
    <alternativeName>
        <fullName evidence="1">Heat shock protein 33 homolog</fullName>
        <shortName evidence="1">HSP33</shortName>
    </alternativeName>
</protein>
<accession>Q7MQ02</accession>